<keyword id="KW-0119">Carbohydrate metabolism</keyword>
<keyword id="KW-0326">Glycosidase</keyword>
<keyword id="KW-0378">Hydrolase</keyword>
<keyword id="KW-1185">Reference proteome</keyword>
<protein>
    <recommendedName>
        <fullName>Putative alpha-amylase</fullName>
        <ecNumber>3.2.1.1</ecNumber>
    </recommendedName>
</protein>
<comment type="catalytic activity">
    <reaction>
        <text>Endohydrolysis of (1-&gt;4)-alpha-D-glucosidic linkages in polysaccharides containing three or more (1-&gt;4)-alpha-linked D-glucose units.</text>
        <dbReference type="EC" id="3.2.1.1"/>
    </reaction>
</comment>
<comment type="similarity">
    <text evidence="2">Belongs to the glycosyl hydrolase 57 family.</text>
</comment>
<organism>
    <name type="scientific">Methanocaldococcus jannaschii (strain ATCC 43067 / DSM 2661 / JAL-1 / JCM 10045 / NBRC 100440)</name>
    <name type="common">Methanococcus jannaschii</name>
    <dbReference type="NCBI Taxonomy" id="243232"/>
    <lineage>
        <taxon>Archaea</taxon>
        <taxon>Methanobacteriati</taxon>
        <taxon>Methanobacteriota</taxon>
        <taxon>Methanomada group</taxon>
        <taxon>Methanococci</taxon>
        <taxon>Methanococcales</taxon>
        <taxon>Methanocaldococcaceae</taxon>
        <taxon>Methanocaldococcus</taxon>
    </lineage>
</organism>
<gene>
    <name type="ordered locus">MJ1611</name>
</gene>
<reference key="1">
    <citation type="journal article" date="1996" name="Science">
        <title>Complete genome sequence of the methanogenic archaeon, Methanococcus jannaschii.</title>
        <authorList>
            <person name="Bult C.J."/>
            <person name="White O."/>
            <person name="Olsen G.J."/>
            <person name="Zhou L."/>
            <person name="Fleischmann R.D."/>
            <person name="Sutton G.G."/>
            <person name="Blake J.A."/>
            <person name="FitzGerald L.M."/>
            <person name="Clayton R.A."/>
            <person name="Gocayne J.D."/>
            <person name="Kerlavage A.R."/>
            <person name="Dougherty B.A."/>
            <person name="Tomb J.-F."/>
            <person name="Adams M.D."/>
            <person name="Reich C.I."/>
            <person name="Overbeek R."/>
            <person name="Kirkness E.F."/>
            <person name="Weinstock K.G."/>
            <person name="Merrick J.M."/>
            <person name="Glodek A."/>
            <person name="Scott J.L."/>
            <person name="Geoghagen N.S.M."/>
            <person name="Weidman J.F."/>
            <person name="Fuhrmann J.L."/>
            <person name="Nguyen D."/>
            <person name="Utterback T.R."/>
            <person name="Kelley J.M."/>
            <person name="Peterson J.D."/>
            <person name="Sadow P.W."/>
            <person name="Hanna M.C."/>
            <person name="Cotton M.D."/>
            <person name="Roberts K.M."/>
            <person name="Hurst M.A."/>
            <person name="Kaine B.P."/>
            <person name="Borodovsky M."/>
            <person name="Klenk H.-P."/>
            <person name="Fraser C.M."/>
            <person name="Smith H.O."/>
            <person name="Woese C.R."/>
            <person name="Venter J.C."/>
        </authorList>
    </citation>
    <scope>NUCLEOTIDE SEQUENCE [LARGE SCALE GENOMIC DNA]</scope>
    <source>
        <strain>ATCC 43067 / DSM 2661 / JAL-1 / JCM 10045 / NBRC 100440</strain>
    </source>
</reference>
<accession>Q59006</accession>
<proteinExistence type="inferred from homology"/>
<sequence>MLITFNFEVHQPHRLNKEINQNGNTLWEKYVDTKLNKEVFNKVANKCYIPTNELILELIDEYDFKVNYSITGVFVEQALEFNDYVLDLFKDLVKTGNVELIAETYHHSLTSLFETEDEFIEDIEMHRKMYKEIFGFKAKVFRNTELIYNNRIAKIAKDLGFKAIFTEGIEKILGWRSPNYLYQSPDGMKILLRNYRLSDDIGFRFSARDWDQYPLTADKYAIWLASTPGEVINIYMDYETFGEHHWKETGIFEFLRYLPIEIAKHEHLEVVNVSEVVDRLEPRGEIYVHEFATISWADTERDVSAWLGNKMQRISFEKLKDIGKFIKENSNKLKKLNKFDEIYKMYKVLQTSDNLYYQSIKGLSDMSVHNYFSHFDTPFDAYASYLNILYDFEYYIKELLAKSEFDKNNRRKDGQKQYEKDDEVKKESLINTNIIVAKDDKTESIYIEDEEGKKNKRYERDEGFIIA</sequence>
<evidence type="ECO:0000250" key="1"/>
<evidence type="ECO:0000305" key="2"/>
<feature type="chain" id="PRO_0000184575" description="Putative alpha-amylase">
    <location>
        <begin position="1"/>
        <end position="467"/>
    </location>
</feature>
<feature type="active site" description="Nucleophile" evidence="1">
    <location>
        <position position="145"/>
    </location>
</feature>
<dbReference type="EC" id="3.2.1.1"/>
<dbReference type="EMBL" id="L77117">
    <property type="protein sequence ID" value="AAB99631.1"/>
    <property type="molecule type" value="Genomic_DNA"/>
</dbReference>
<dbReference type="PIR" id="B64501">
    <property type="entry name" value="B64501"/>
</dbReference>
<dbReference type="RefSeq" id="WP_010871136.1">
    <property type="nucleotide sequence ID" value="NC_000909.1"/>
</dbReference>
<dbReference type="SMR" id="Q59006"/>
<dbReference type="FunCoup" id="Q59006">
    <property type="interactions" value="4"/>
</dbReference>
<dbReference type="STRING" id="243232.MJ_1611"/>
<dbReference type="CAZy" id="GH57">
    <property type="family name" value="Glycoside Hydrolase Family 57"/>
</dbReference>
<dbReference type="PaxDb" id="243232-MJ_1611"/>
<dbReference type="EnsemblBacteria" id="AAB99631">
    <property type="protein sequence ID" value="AAB99631"/>
    <property type="gene ID" value="MJ_1611"/>
</dbReference>
<dbReference type="GeneID" id="1452520"/>
<dbReference type="KEGG" id="mja:MJ_1611"/>
<dbReference type="eggNOG" id="arCOG03278">
    <property type="taxonomic scope" value="Archaea"/>
</dbReference>
<dbReference type="HOGENOM" id="CLU_033691_0_0_2"/>
<dbReference type="InParanoid" id="Q59006"/>
<dbReference type="OrthoDB" id="64936at2157"/>
<dbReference type="PhylomeDB" id="Q59006"/>
<dbReference type="Proteomes" id="UP000000805">
    <property type="component" value="Chromosome"/>
</dbReference>
<dbReference type="GO" id="GO:0004556">
    <property type="term" value="F:alpha-amylase activity"/>
    <property type="evidence" value="ECO:0007669"/>
    <property type="project" value="UniProtKB-EC"/>
</dbReference>
<dbReference type="GO" id="GO:0005975">
    <property type="term" value="P:carbohydrate metabolic process"/>
    <property type="evidence" value="ECO:0007669"/>
    <property type="project" value="InterPro"/>
</dbReference>
<dbReference type="CDD" id="cd10795">
    <property type="entry name" value="GH57N_MJA1_like"/>
    <property type="match status" value="1"/>
</dbReference>
<dbReference type="Gene3D" id="3.20.110.20">
    <property type="match status" value="1"/>
</dbReference>
<dbReference type="InterPro" id="IPR052046">
    <property type="entry name" value="GH57_Enzymes"/>
</dbReference>
<dbReference type="InterPro" id="IPR011330">
    <property type="entry name" value="Glyco_hydro/deAcase_b/a-brl"/>
</dbReference>
<dbReference type="InterPro" id="IPR004300">
    <property type="entry name" value="Glyco_hydro_57_N"/>
</dbReference>
<dbReference type="PANTHER" id="PTHR36306:SF1">
    <property type="entry name" value="ALPHA-AMYLASE-RELATED"/>
    <property type="match status" value="1"/>
</dbReference>
<dbReference type="PANTHER" id="PTHR36306">
    <property type="entry name" value="ALPHA-AMYLASE-RELATED-RELATED"/>
    <property type="match status" value="1"/>
</dbReference>
<dbReference type="Pfam" id="PF03065">
    <property type="entry name" value="Glyco_hydro_57"/>
    <property type="match status" value="1"/>
</dbReference>
<dbReference type="SUPFAM" id="SSF88713">
    <property type="entry name" value="Glycoside hydrolase/deacetylase"/>
    <property type="match status" value="1"/>
</dbReference>
<name>AMYA_METJA</name>